<comment type="subcellular location">
    <subcellularLocation>
        <location evidence="1">Nucleus</location>
    </subcellularLocation>
</comment>
<protein>
    <recommendedName>
        <fullName>Myoneurin</fullName>
    </recommendedName>
</protein>
<evidence type="ECO:0000250" key="1"/>
<evidence type="ECO:0000255" key="2"/>
<evidence type="ECO:0000255" key="3">
    <source>
        <dbReference type="PROSITE-ProRule" id="PRU00037"/>
    </source>
</evidence>
<evidence type="ECO:0000255" key="4">
    <source>
        <dbReference type="PROSITE-ProRule" id="PRU00042"/>
    </source>
</evidence>
<evidence type="ECO:0000256" key="5">
    <source>
        <dbReference type="SAM" id="MobiDB-lite"/>
    </source>
</evidence>
<keyword id="KW-0238">DNA-binding</keyword>
<keyword id="KW-0479">Metal-binding</keyword>
<keyword id="KW-0539">Nucleus</keyword>
<keyword id="KW-1185">Reference proteome</keyword>
<keyword id="KW-0677">Repeat</keyword>
<keyword id="KW-0804">Transcription</keyword>
<keyword id="KW-0805">Transcription regulation</keyword>
<keyword id="KW-0862">Zinc</keyword>
<keyword id="KW-0863">Zinc-finger</keyword>
<proteinExistence type="evidence at transcript level"/>
<organism>
    <name type="scientific">Xenopus laevis</name>
    <name type="common">African clawed frog</name>
    <dbReference type="NCBI Taxonomy" id="8355"/>
    <lineage>
        <taxon>Eukaryota</taxon>
        <taxon>Metazoa</taxon>
        <taxon>Chordata</taxon>
        <taxon>Craniata</taxon>
        <taxon>Vertebrata</taxon>
        <taxon>Euteleostomi</taxon>
        <taxon>Amphibia</taxon>
        <taxon>Batrachia</taxon>
        <taxon>Anura</taxon>
        <taxon>Pipoidea</taxon>
        <taxon>Pipidae</taxon>
        <taxon>Xenopodinae</taxon>
        <taxon>Xenopus</taxon>
        <taxon>Xenopus</taxon>
    </lineage>
</organism>
<name>MYNN_XENLA</name>
<accession>Q6DDV0</accession>
<feature type="chain" id="PRO_0000248221" description="Myoneurin">
    <location>
        <begin position="1"/>
        <end position="609"/>
    </location>
</feature>
<feature type="domain" description="BTB" evidence="3">
    <location>
        <begin position="24"/>
        <end position="89"/>
    </location>
</feature>
<feature type="zinc finger region" description="C2H2-type 1" evidence="4">
    <location>
        <begin position="301"/>
        <end position="323"/>
    </location>
</feature>
<feature type="zinc finger region" description="C2H2-type 2" evidence="4">
    <location>
        <begin position="329"/>
        <end position="351"/>
    </location>
</feature>
<feature type="zinc finger region" description="C2H2-type 3" evidence="4">
    <location>
        <begin position="357"/>
        <end position="380"/>
    </location>
</feature>
<feature type="zinc finger region" description="C2H2-type 4" evidence="4">
    <location>
        <begin position="386"/>
        <end position="408"/>
    </location>
</feature>
<feature type="zinc finger region" description="C2H2-type 5" evidence="4">
    <location>
        <begin position="414"/>
        <end position="436"/>
    </location>
</feature>
<feature type="zinc finger region" description="C2H2-type 6" evidence="4">
    <location>
        <begin position="442"/>
        <end position="464"/>
    </location>
</feature>
<feature type="zinc finger region" description="C2H2-type 7" evidence="4">
    <location>
        <begin position="470"/>
        <end position="492"/>
    </location>
</feature>
<feature type="zinc finger region" description="C2H2-type 8" evidence="4">
    <location>
        <begin position="498"/>
        <end position="521"/>
    </location>
</feature>
<feature type="region of interest" description="Disordered" evidence="5">
    <location>
        <begin position="528"/>
        <end position="553"/>
    </location>
</feature>
<feature type="short sequence motif" description="Nuclear localization signal" evidence="2">
    <location>
        <begin position="172"/>
        <end position="188"/>
    </location>
</feature>
<feature type="short sequence motif" description="Nuclear localization signal" evidence="2">
    <location>
        <begin position="257"/>
        <end position="262"/>
    </location>
</feature>
<feature type="compositionally biased region" description="Low complexity" evidence="5">
    <location>
        <begin position="533"/>
        <end position="546"/>
    </location>
</feature>
<sequence length="609" mass="68695">MALSDHSRQLLDTLNKQRQSGFLCDCTILIGDFHFKAHRNVLASFSDYFRAYFKDSLDSIVLLDQIKVTPSGFQTLLDFIYSGNLNYDSCNLEEINLAAQHLRLEDVVATCRTKIESLVGLTKPSVTHLAPTSSSLDENEYFTSLYPREAMKVDAIEISYSQSKVKKGIKGKKSQKIKRWKRPLRSHQHVKKKSSKCQLSSPKTPAVLSLDAKELELMAADHVAKDNTCLLSFTSEIDCEIFLSQNISLETATMTQQKPAKLQQDCAMKEHCISNIADITNVCTMEGCDKELDPKYSKNKPVCNTCGKVFSEASSLRRHMRIHKGVKPYVCHLCAKAFTQCNQLKTHVRTHTGEKPYQCKKCDKGFAQKCQLVFHSRMHHGEEKPYKCDVCNLQFATSSNLKIHARKHSGEKPYVCDRCGQRFAQASTLTYHVRRHTGEKPYVCDTCGKAFAVSSSLITHARKHTGEKPYICGVCRKSFISSGELNKHFRSHTGERPFVCEVCGNSYTDVKNLKKHKLKMHKGSEEAIEMKSAENSSSSEDSTTKSPEPESLELKPSDLFLPLTLHISPDDPQMLLPVSDNRGLSSETLLRASVPSYSEPQFIFLQQMY</sequence>
<dbReference type="EMBL" id="BC077406">
    <property type="protein sequence ID" value="AAH77406.1"/>
    <property type="molecule type" value="mRNA"/>
</dbReference>
<dbReference type="SMR" id="Q6DDV0"/>
<dbReference type="Proteomes" id="UP000186698">
    <property type="component" value="Unplaced"/>
</dbReference>
<dbReference type="GO" id="GO:0005634">
    <property type="term" value="C:nucleus"/>
    <property type="evidence" value="ECO:0000318"/>
    <property type="project" value="GO_Central"/>
</dbReference>
<dbReference type="GO" id="GO:0003677">
    <property type="term" value="F:DNA binding"/>
    <property type="evidence" value="ECO:0007669"/>
    <property type="project" value="UniProtKB-KW"/>
</dbReference>
<dbReference type="GO" id="GO:0000981">
    <property type="term" value="F:DNA-binding transcription factor activity, RNA polymerase II-specific"/>
    <property type="evidence" value="ECO:0000318"/>
    <property type="project" value="GO_Central"/>
</dbReference>
<dbReference type="GO" id="GO:0008270">
    <property type="term" value="F:zinc ion binding"/>
    <property type="evidence" value="ECO:0007669"/>
    <property type="project" value="UniProtKB-KW"/>
</dbReference>
<dbReference type="GO" id="GO:0006357">
    <property type="term" value="P:regulation of transcription by RNA polymerase II"/>
    <property type="evidence" value="ECO:0000318"/>
    <property type="project" value="GO_Central"/>
</dbReference>
<dbReference type="CDD" id="cd18217">
    <property type="entry name" value="BTB_POZ_ZBTB31_myoneurin"/>
    <property type="match status" value="1"/>
</dbReference>
<dbReference type="FunFam" id="3.30.160.60:FF:000678">
    <property type="entry name" value="Myoneurin isoform X1"/>
    <property type="match status" value="1"/>
</dbReference>
<dbReference type="FunFam" id="3.30.160.60:FF:000472">
    <property type="entry name" value="myoneurin isoform X1"/>
    <property type="match status" value="1"/>
</dbReference>
<dbReference type="FunFam" id="3.30.160.60:FF:000816">
    <property type="entry name" value="myoneurin isoform X1"/>
    <property type="match status" value="1"/>
</dbReference>
<dbReference type="FunFam" id="3.30.160.60:FF:000267">
    <property type="entry name" value="Zinc finger and BTB domain-containing 49"/>
    <property type="match status" value="1"/>
</dbReference>
<dbReference type="FunFam" id="3.30.160.60:FF:000446">
    <property type="entry name" value="Zinc finger protein"/>
    <property type="match status" value="1"/>
</dbReference>
<dbReference type="FunFam" id="3.30.160.60:FF:000352">
    <property type="entry name" value="zinc finger protein 3 homolog"/>
    <property type="match status" value="1"/>
</dbReference>
<dbReference type="FunFam" id="3.30.160.60:FF:000030">
    <property type="entry name" value="Zinc finger protein 628"/>
    <property type="match status" value="1"/>
</dbReference>
<dbReference type="FunFam" id="3.30.160.60:FF:002586">
    <property type="entry name" value="Zinc finger protein 787"/>
    <property type="match status" value="1"/>
</dbReference>
<dbReference type="Gene3D" id="3.30.160.60">
    <property type="entry name" value="Classic Zinc Finger"/>
    <property type="match status" value="8"/>
</dbReference>
<dbReference type="Gene3D" id="3.30.710.10">
    <property type="entry name" value="Potassium Channel Kv1.1, Chain A"/>
    <property type="match status" value="1"/>
</dbReference>
<dbReference type="InterPro" id="IPR000210">
    <property type="entry name" value="BTB/POZ_dom"/>
</dbReference>
<dbReference type="InterPro" id="IPR011333">
    <property type="entry name" value="SKP1/BTB/POZ_sf"/>
</dbReference>
<dbReference type="InterPro" id="IPR036236">
    <property type="entry name" value="Znf_C2H2_sf"/>
</dbReference>
<dbReference type="InterPro" id="IPR013087">
    <property type="entry name" value="Znf_C2H2_type"/>
</dbReference>
<dbReference type="PANTHER" id="PTHR24394:SF29">
    <property type="entry name" value="MYONEURIN"/>
    <property type="match status" value="1"/>
</dbReference>
<dbReference type="PANTHER" id="PTHR24394">
    <property type="entry name" value="ZINC FINGER PROTEIN"/>
    <property type="match status" value="1"/>
</dbReference>
<dbReference type="Pfam" id="PF00651">
    <property type="entry name" value="BTB"/>
    <property type="match status" value="1"/>
</dbReference>
<dbReference type="Pfam" id="PF00096">
    <property type="entry name" value="zf-C2H2"/>
    <property type="match status" value="7"/>
</dbReference>
<dbReference type="SMART" id="SM00225">
    <property type="entry name" value="BTB"/>
    <property type="match status" value="1"/>
</dbReference>
<dbReference type="SMART" id="SM00355">
    <property type="entry name" value="ZnF_C2H2"/>
    <property type="match status" value="8"/>
</dbReference>
<dbReference type="SUPFAM" id="SSF57667">
    <property type="entry name" value="beta-beta-alpha zinc fingers"/>
    <property type="match status" value="4"/>
</dbReference>
<dbReference type="SUPFAM" id="SSF54695">
    <property type="entry name" value="POZ domain"/>
    <property type="match status" value="1"/>
</dbReference>
<dbReference type="PROSITE" id="PS50097">
    <property type="entry name" value="BTB"/>
    <property type="match status" value="1"/>
</dbReference>
<dbReference type="PROSITE" id="PS00028">
    <property type="entry name" value="ZINC_FINGER_C2H2_1"/>
    <property type="match status" value="8"/>
</dbReference>
<dbReference type="PROSITE" id="PS50157">
    <property type="entry name" value="ZINC_FINGER_C2H2_2"/>
    <property type="match status" value="8"/>
</dbReference>
<reference key="1">
    <citation type="submission" date="2004-07" db="EMBL/GenBank/DDBJ databases">
        <authorList>
            <consortium name="NIH - Xenopus Gene Collection (XGC) project"/>
        </authorList>
    </citation>
    <scope>NUCLEOTIDE SEQUENCE [LARGE SCALE MRNA]</scope>
    <source>
        <tissue>Embryo</tissue>
    </source>
</reference>
<gene>
    <name type="primary">mynn</name>
</gene>